<feature type="chain" id="PRO_0000210725" description="Putative MgpC-like protein MPN_464">
    <location>
        <begin position="1"/>
        <end position="445"/>
    </location>
</feature>
<feature type="region of interest" description="Disordered" evidence="1">
    <location>
        <begin position="23"/>
        <end position="44"/>
    </location>
</feature>
<feature type="compositionally biased region" description="Low complexity" evidence="1">
    <location>
        <begin position="31"/>
        <end position="43"/>
    </location>
</feature>
<sequence length="445" mass="48275">MAAVTDNQQSGDNNGLVSLAQRSTTVAVQKSDSSGSQGQGTTDNKFQKYLNTTQALHQMGVIVPSLETWPGKPSTGIATRAAGGVSVQAATRQSTSTNEDLSNVITQLYHTSTSQLAYLNGQIVVMGSDRVPSLWYWVVDERTTSGRATWWAHTELNWGTDKQKQFVENQLGFKDDSNSDSKNSNLKAQGLTQPAYLIAGLDVVADHLVFAAFKAGAVGYDMTTDSNASTKDQVLAWSTTAGLDSDGGYKALVENTAGLNGPINGLFILLDTFAYVTPVSGMKGGSKNTEAVQTKYPVKDDSKASAKIASLINASPLNSYGDDGVTVFDALGLNFNFKLDEARLPSRTDQLLVYGIVNESELKSARENAQSTSDDNSNTKVKWTNTASHYLPVPYYYSANFPEAGNRRRAEQRNGVITIKKAIYPEVRGRQLQNIFDDWKTNKSR</sequence>
<accession>P75319</accession>
<dbReference type="EMBL" id="U00089">
    <property type="protein sequence ID" value="AAB96025.1"/>
    <property type="molecule type" value="Genomic_DNA"/>
</dbReference>
<dbReference type="PIR" id="S73703">
    <property type="entry name" value="S73703"/>
</dbReference>
<dbReference type="RefSeq" id="NP_110152.1">
    <property type="nucleotide sequence ID" value="NC_000912.1"/>
</dbReference>
<dbReference type="SMR" id="P75319"/>
<dbReference type="EnsemblBacteria" id="AAB96025">
    <property type="protein sequence ID" value="AAB96025"/>
    <property type="gene ID" value="MPN_464"/>
</dbReference>
<dbReference type="KEGG" id="mpn:MPN_464"/>
<dbReference type="PATRIC" id="fig|272634.6.peg.500"/>
<dbReference type="HOGENOM" id="CLU_054937_0_0_14"/>
<dbReference type="OrthoDB" id="403469at2"/>
<dbReference type="BioCyc" id="MPNE272634:G1GJ3-760-MONOMER"/>
<dbReference type="Proteomes" id="UP000000808">
    <property type="component" value="Chromosome"/>
</dbReference>
<dbReference type="InterPro" id="IPR007885">
    <property type="entry name" value="MgpC"/>
</dbReference>
<dbReference type="Pfam" id="PF05220">
    <property type="entry name" value="MgpC"/>
    <property type="match status" value="1"/>
</dbReference>
<organism>
    <name type="scientific">Mycoplasma pneumoniae (strain ATCC 29342 / M129 / Subtype 1)</name>
    <name type="common">Mycoplasmoides pneumoniae</name>
    <dbReference type="NCBI Taxonomy" id="272634"/>
    <lineage>
        <taxon>Bacteria</taxon>
        <taxon>Bacillati</taxon>
        <taxon>Mycoplasmatota</taxon>
        <taxon>Mycoplasmoidales</taxon>
        <taxon>Mycoplasmoidaceae</taxon>
        <taxon>Mycoplasmoides</taxon>
    </lineage>
</organism>
<proteinExistence type="uncertain"/>
<protein>
    <recommendedName>
        <fullName>Putative MgpC-like protein MPN_464</fullName>
    </recommendedName>
</protein>
<comment type="similarity">
    <text evidence="2">Belongs to the MgpC family.</text>
</comment>
<comment type="caution">
    <text evidence="2">Could be the product of a pseudogene.</text>
</comment>
<name>Y464_MYCPN</name>
<gene>
    <name type="ordered locus">MPN_464</name>
    <name type="ORF">H08_orf445</name>
    <name type="ORF">MP377</name>
</gene>
<evidence type="ECO:0000256" key="1">
    <source>
        <dbReference type="SAM" id="MobiDB-lite"/>
    </source>
</evidence>
<evidence type="ECO:0000305" key="2"/>
<keyword id="KW-1185">Reference proteome</keyword>
<reference key="1">
    <citation type="journal article" date="1996" name="Nucleic Acids Res.">
        <title>Complete sequence analysis of the genome of the bacterium Mycoplasma pneumoniae.</title>
        <authorList>
            <person name="Himmelreich R."/>
            <person name="Hilbert H."/>
            <person name="Plagens H."/>
            <person name="Pirkl E."/>
            <person name="Li B.-C."/>
            <person name="Herrmann R."/>
        </authorList>
    </citation>
    <scope>NUCLEOTIDE SEQUENCE [LARGE SCALE GENOMIC DNA]</scope>
    <source>
        <strain>ATCC 29342 / M129 / Subtype 1</strain>
    </source>
</reference>